<organism>
    <name type="scientific">Schizosaccharomyces pombe (strain 972 / ATCC 24843)</name>
    <name type="common">Fission yeast</name>
    <dbReference type="NCBI Taxonomy" id="284812"/>
    <lineage>
        <taxon>Eukaryota</taxon>
        <taxon>Fungi</taxon>
        <taxon>Dikarya</taxon>
        <taxon>Ascomycota</taxon>
        <taxon>Taphrinomycotina</taxon>
        <taxon>Schizosaccharomycetes</taxon>
        <taxon>Schizosaccharomycetales</taxon>
        <taxon>Schizosaccharomycetaceae</taxon>
        <taxon>Schizosaccharomyces</taxon>
    </lineage>
</organism>
<gene>
    <name type="primary">clr6</name>
    <name type="ORF">SPBC36.05c</name>
</gene>
<comment type="function">
    <text evidence="2">Responsible for the deacetylation of lysine residues on the N-terminal part of the core histones (H2A, H2B, H3 and H4). Histone deacetylation gives a tag for epigenetic repression and plays an important role in transcriptional regulation, cell cycle progression and developmental events. Histone deacetylases act via the formation of large multiprotein complexes. Has a role in chromatin assembly and chromosome segregation.</text>
</comment>
<comment type="catalytic activity">
    <reaction>
        <text>N(6)-acetyl-L-lysyl-[histone] + H2O = L-lysyl-[histone] + acetate</text>
        <dbReference type="Rhea" id="RHEA:58196"/>
        <dbReference type="Rhea" id="RHEA-COMP:9845"/>
        <dbReference type="Rhea" id="RHEA-COMP:11338"/>
        <dbReference type="ChEBI" id="CHEBI:15377"/>
        <dbReference type="ChEBI" id="CHEBI:29969"/>
        <dbReference type="ChEBI" id="CHEBI:30089"/>
        <dbReference type="ChEBI" id="CHEBI:61930"/>
        <dbReference type="EC" id="3.5.1.98"/>
    </reaction>
</comment>
<comment type="subunit">
    <text evidence="2">Heterotetramer of alp13, clr6, prw1 and pst2.</text>
</comment>
<comment type="interaction">
    <interactant intactId="EBI-904651">
        <id>O59702</id>
    </interactant>
    <interactant intactId="EBI-904686">
        <id>O13919</id>
        <label>pst2</label>
    </interactant>
    <organismsDiffer>false</organismsDiffer>
    <experiments>7</experiments>
</comment>
<comment type="interaction">
    <interactant intactId="EBI-904651">
        <id>O59702</id>
    </interactant>
    <interactant intactId="EBI-15632828">
        <id>Q09819</id>
        <label>SPAC16C9.05</label>
    </interactant>
    <organismsDiffer>false</organismsDiffer>
    <experiments>2</experiments>
</comment>
<comment type="subcellular location">
    <subcellularLocation>
        <location evidence="2">Nucleus</location>
    </subcellularLocation>
</comment>
<comment type="similarity">
    <text evidence="3">Belongs to the histone deacetylase family. HD type 1 subfamily.</text>
</comment>
<proteinExistence type="evidence at protein level"/>
<sequence length="405" mass="46112">MGFGKKKVSYFYDEDVGNYHYGPQHPMKPHRVRMVHNLVVNYNLYEKLNVITPVRATRNDMTRCHTDEYIEFLWRVTPDTMEKFQPHQLKFNVGDDCPVFDGLYEFCSISAGGSIGAAQELNSGNAEIAINWAGGLHHAKKREASGFCYVNDIALAALELLKYHQRVLYIDIDVHHGDGVEEFFYTTDRVMTCSFHKFGEYFPGTGHIKDTGIGTGKNYAVNVPLRDGIDDESYESVFKPVISHIMQWFRPEAVILQCGTDSLAGDRLGCFNLSMKGHSMCVDFVKSFNLPMICVGGGGYTVRNVARVWTYETGLLAGEELDENLPYNDYLQYYGPDYKLNVLSNNMENHNTRQYLDSITSEIIENLRNLSFAPSVQMHKTPGDFTFENAEKQNIAKEEIMDERV</sequence>
<accession>O59702</accession>
<name>CLR6_SCHPO</name>
<evidence type="ECO:0000250" key="1"/>
<evidence type="ECO:0000269" key="2">
    <source>
    </source>
</evidence>
<evidence type="ECO:0000305" key="3"/>
<evidence type="ECO:0007829" key="4">
    <source>
        <dbReference type="PDB" id="8I02"/>
    </source>
</evidence>
<evidence type="ECO:0007829" key="5">
    <source>
        <dbReference type="PDB" id="8I03"/>
    </source>
</evidence>
<keyword id="KW-0002">3D-structure</keyword>
<keyword id="KW-0156">Chromatin regulator</keyword>
<keyword id="KW-0903">Direct protein sequencing</keyword>
<keyword id="KW-0378">Hydrolase</keyword>
<keyword id="KW-0539">Nucleus</keyword>
<keyword id="KW-1185">Reference proteome</keyword>
<keyword id="KW-0678">Repressor</keyword>
<keyword id="KW-0804">Transcription</keyword>
<keyword id="KW-0805">Transcription regulation</keyword>
<protein>
    <recommendedName>
        <fullName>Histone deacetylase clr6</fullName>
        <ecNumber>3.5.1.98</ecNumber>
    </recommendedName>
    <alternativeName>
        <fullName>Cryptic loci regulator 6</fullName>
    </alternativeName>
</protein>
<feature type="chain" id="PRO_0000114740" description="Histone deacetylase clr6">
    <location>
        <begin position="1"/>
        <end position="405"/>
    </location>
</feature>
<feature type="region of interest" description="Histone deacetylase">
    <location>
        <begin position="6"/>
        <end position="318"/>
    </location>
</feature>
<feature type="active site" evidence="1">
    <location>
        <position position="138"/>
    </location>
</feature>
<feature type="strand" evidence="4">
    <location>
        <begin position="9"/>
        <end position="11"/>
    </location>
</feature>
<feature type="helix" evidence="4">
    <location>
        <begin position="14"/>
        <end position="18"/>
    </location>
</feature>
<feature type="helix" evidence="4">
    <location>
        <begin position="31"/>
        <end position="41"/>
    </location>
</feature>
<feature type="turn" evidence="4">
    <location>
        <begin position="45"/>
        <end position="47"/>
    </location>
</feature>
<feature type="strand" evidence="4">
    <location>
        <begin position="48"/>
        <end position="51"/>
    </location>
</feature>
<feature type="turn" evidence="4">
    <location>
        <begin position="58"/>
        <end position="64"/>
    </location>
</feature>
<feature type="helix" evidence="4">
    <location>
        <begin position="67"/>
        <end position="73"/>
    </location>
</feature>
<feature type="strand" evidence="4">
    <location>
        <begin position="78"/>
        <end position="80"/>
    </location>
</feature>
<feature type="turn" evidence="4">
    <location>
        <begin position="83"/>
        <end position="86"/>
    </location>
</feature>
<feature type="helix" evidence="4">
    <location>
        <begin position="87"/>
        <end position="90"/>
    </location>
</feature>
<feature type="turn" evidence="4">
    <location>
        <begin position="94"/>
        <end position="96"/>
    </location>
</feature>
<feature type="helix" evidence="4">
    <location>
        <begin position="103"/>
        <end position="122"/>
    </location>
</feature>
<feature type="turn" evidence="4">
    <location>
        <begin position="123"/>
        <end position="125"/>
    </location>
</feature>
<feature type="strand" evidence="4">
    <location>
        <begin position="127"/>
        <end position="133"/>
    </location>
</feature>
<feature type="strand" evidence="4">
    <location>
        <begin position="141"/>
        <end position="143"/>
    </location>
</feature>
<feature type="strand" evidence="4">
    <location>
        <begin position="148"/>
        <end position="150"/>
    </location>
</feature>
<feature type="helix" evidence="4">
    <location>
        <begin position="153"/>
        <end position="160"/>
    </location>
</feature>
<feature type="turn" evidence="5">
    <location>
        <begin position="161"/>
        <end position="163"/>
    </location>
</feature>
<feature type="strand" evidence="4">
    <location>
        <begin position="167"/>
        <end position="171"/>
    </location>
</feature>
<feature type="strand" evidence="4">
    <location>
        <begin position="173"/>
        <end position="175"/>
    </location>
</feature>
<feature type="helix" evidence="4">
    <location>
        <begin position="178"/>
        <end position="182"/>
    </location>
</feature>
<feature type="turn" evidence="4">
    <location>
        <begin position="183"/>
        <end position="186"/>
    </location>
</feature>
<feature type="strand" evidence="4">
    <location>
        <begin position="188"/>
        <end position="197"/>
    </location>
</feature>
<feature type="helix" evidence="5">
    <location>
        <begin position="214"/>
        <end position="216"/>
    </location>
</feature>
<feature type="strand" evidence="4">
    <location>
        <begin position="220"/>
        <end position="225"/>
    </location>
</feature>
<feature type="helix" evidence="4">
    <location>
        <begin position="231"/>
        <end position="248"/>
    </location>
</feature>
<feature type="strand" evidence="4">
    <location>
        <begin position="254"/>
        <end position="257"/>
    </location>
</feature>
<feature type="strand" evidence="4">
    <location>
        <begin position="260"/>
        <end position="265"/>
    </location>
</feature>
<feature type="helix" evidence="4">
    <location>
        <begin position="275"/>
        <end position="285"/>
    </location>
</feature>
<feature type="helix" evidence="4">
    <location>
        <begin position="286"/>
        <end position="288"/>
    </location>
</feature>
<feature type="strand" evidence="4">
    <location>
        <begin position="292"/>
        <end position="295"/>
    </location>
</feature>
<feature type="helix" evidence="4">
    <location>
        <begin position="302"/>
        <end position="316"/>
    </location>
</feature>
<feature type="helix" evidence="4">
    <location>
        <begin position="331"/>
        <end position="334"/>
    </location>
</feature>
<feature type="turn" evidence="4">
    <location>
        <begin position="335"/>
        <end position="337"/>
    </location>
</feature>
<feature type="helix" evidence="4">
    <location>
        <begin position="353"/>
        <end position="368"/>
    </location>
</feature>
<feature type="turn" evidence="4">
    <location>
        <begin position="369"/>
        <end position="371"/>
    </location>
</feature>
<reference key="1">
    <citation type="journal article" date="1998" name="Genetics">
        <title>Histone deacetylase homologs regulate epigenetic inheritance of transcriptional silencing and chromosome segregation in fission yeast.</title>
        <authorList>
            <person name="Grewal S.I.S."/>
            <person name="Bonaduce M.J."/>
            <person name="Klar A.J.S."/>
        </authorList>
    </citation>
    <scope>NUCLEOTIDE SEQUENCE [GENOMIC DNA]</scope>
    <source>
        <strain>972 / ATCC 24843</strain>
    </source>
</reference>
<reference key="2">
    <citation type="journal article" date="2002" name="Nature">
        <title>The genome sequence of Schizosaccharomyces pombe.</title>
        <authorList>
            <person name="Wood V."/>
            <person name="Gwilliam R."/>
            <person name="Rajandream M.A."/>
            <person name="Lyne M.H."/>
            <person name="Lyne R."/>
            <person name="Stewart A."/>
            <person name="Sgouros J.G."/>
            <person name="Peat N."/>
            <person name="Hayles J."/>
            <person name="Baker S.G."/>
            <person name="Basham D."/>
            <person name="Bowman S."/>
            <person name="Brooks K."/>
            <person name="Brown D."/>
            <person name="Brown S."/>
            <person name="Chillingworth T."/>
            <person name="Churcher C.M."/>
            <person name="Collins M."/>
            <person name="Connor R."/>
            <person name="Cronin A."/>
            <person name="Davis P."/>
            <person name="Feltwell T."/>
            <person name="Fraser A."/>
            <person name="Gentles S."/>
            <person name="Goble A."/>
            <person name="Hamlin N."/>
            <person name="Harris D.E."/>
            <person name="Hidalgo J."/>
            <person name="Hodgson G."/>
            <person name="Holroyd S."/>
            <person name="Hornsby T."/>
            <person name="Howarth S."/>
            <person name="Huckle E.J."/>
            <person name="Hunt S."/>
            <person name="Jagels K."/>
            <person name="James K.D."/>
            <person name="Jones L."/>
            <person name="Jones M."/>
            <person name="Leather S."/>
            <person name="McDonald S."/>
            <person name="McLean J."/>
            <person name="Mooney P."/>
            <person name="Moule S."/>
            <person name="Mungall K.L."/>
            <person name="Murphy L.D."/>
            <person name="Niblett D."/>
            <person name="Odell C."/>
            <person name="Oliver K."/>
            <person name="O'Neil S."/>
            <person name="Pearson D."/>
            <person name="Quail M.A."/>
            <person name="Rabbinowitsch E."/>
            <person name="Rutherford K.M."/>
            <person name="Rutter S."/>
            <person name="Saunders D."/>
            <person name="Seeger K."/>
            <person name="Sharp S."/>
            <person name="Skelton J."/>
            <person name="Simmonds M.N."/>
            <person name="Squares R."/>
            <person name="Squares S."/>
            <person name="Stevens K."/>
            <person name="Taylor K."/>
            <person name="Taylor R.G."/>
            <person name="Tivey A."/>
            <person name="Walsh S.V."/>
            <person name="Warren T."/>
            <person name="Whitehead S."/>
            <person name="Woodward J.R."/>
            <person name="Volckaert G."/>
            <person name="Aert R."/>
            <person name="Robben J."/>
            <person name="Grymonprez B."/>
            <person name="Weltjens I."/>
            <person name="Vanstreels E."/>
            <person name="Rieger M."/>
            <person name="Schaefer M."/>
            <person name="Mueller-Auer S."/>
            <person name="Gabel C."/>
            <person name="Fuchs M."/>
            <person name="Duesterhoeft A."/>
            <person name="Fritzc C."/>
            <person name="Holzer E."/>
            <person name="Moestl D."/>
            <person name="Hilbert H."/>
            <person name="Borzym K."/>
            <person name="Langer I."/>
            <person name="Beck A."/>
            <person name="Lehrach H."/>
            <person name="Reinhardt R."/>
            <person name="Pohl T.M."/>
            <person name="Eger P."/>
            <person name="Zimmermann W."/>
            <person name="Wedler H."/>
            <person name="Wambutt R."/>
            <person name="Purnelle B."/>
            <person name="Goffeau A."/>
            <person name="Cadieu E."/>
            <person name="Dreano S."/>
            <person name="Gloux S."/>
            <person name="Lelaure V."/>
            <person name="Mottier S."/>
            <person name="Galibert F."/>
            <person name="Aves S.J."/>
            <person name="Xiang Z."/>
            <person name="Hunt C."/>
            <person name="Moore K."/>
            <person name="Hurst S.M."/>
            <person name="Lucas M."/>
            <person name="Rochet M."/>
            <person name="Gaillardin C."/>
            <person name="Tallada V.A."/>
            <person name="Garzon A."/>
            <person name="Thode G."/>
            <person name="Daga R.R."/>
            <person name="Cruzado L."/>
            <person name="Jimenez J."/>
            <person name="Sanchez M."/>
            <person name="del Rey F."/>
            <person name="Benito J."/>
            <person name="Dominguez A."/>
            <person name="Revuelta J.L."/>
            <person name="Moreno S."/>
            <person name="Armstrong J."/>
            <person name="Forsburg S.L."/>
            <person name="Cerutti L."/>
            <person name="Lowe T."/>
            <person name="McCombie W.R."/>
            <person name="Paulsen I."/>
            <person name="Potashkin J."/>
            <person name="Shpakovski G.V."/>
            <person name="Ussery D."/>
            <person name="Barrell B.G."/>
            <person name="Nurse P."/>
        </authorList>
    </citation>
    <scope>NUCLEOTIDE SEQUENCE [LARGE SCALE GENOMIC DNA]</scope>
    <source>
        <strain>972 / ATCC 24843</strain>
    </source>
</reference>
<reference key="3">
    <citation type="journal article" date="2003" name="EMBO J.">
        <title>Alp13, an MRG family protein, is a component of fission yeast Clr6 histone deacetylase required for genomic integrity.</title>
        <authorList>
            <person name="Nakayama J."/>
            <person name="Xiao G."/>
            <person name="Noma K."/>
            <person name="Malikzay A."/>
            <person name="Bjerling P."/>
            <person name="Ekwall K."/>
            <person name="Kobayashi R."/>
            <person name="Grewal S.I.S."/>
        </authorList>
    </citation>
    <scope>PROTEIN SEQUENCE OF 340-368 AND 381-404</scope>
    <scope>FUNCTION</scope>
    <scope>SUBUNIT</scope>
    <scope>SUBCELLULAR LOCATION</scope>
</reference>
<dbReference type="EC" id="3.5.1.98"/>
<dbReference type="EMBL" id="AF064206">
    <property type="protein sequence ID" value="AAD05211.1"/>
    <property type="molecule type" value="Genomic_DNA"/>
</dbReference>
<dbReference type="EMBL" id="CU329671">
    <property type="protein sequence ID" value="CAA19053.1"/>
    <property type="molecule type" value="Genomic_DNA"/>
</dbReference>
<dbReference type="PIR" id="T40300">
    <property type="entry name" value="T40300"/>
</dbReference>
<dbReference type="RefSeq" id="NP_595333.1">
    <property type="nucleotide sequence ID" value="NM_001021241.2"/>
</dbReference>
<dbReference type="PDB" id="8I02">
    <property type="method" value="EM"/>
    <property type="resolution" value="2.90 A"/>
    <property type="chains" value="B=1-405"/>
</dbReference>
<dbReference type="PDB" id="8I03">
    <property type="method" value="EM"/>
    <property type="resolution" value="3.20 A"/>
    <property type="chains" value="C/D=1-405"/>
</dbReference>
<dbReference type="PDB" id="8IFG">
    <property type="method" value="EM"/>
    <property type="resolution" value="3.20 A"/>
    <property type="chains" value="C=5-405"/>
</dbReference>
<dbReference type="PDBsum" id="8I02"/>
<dbReference type="PDBsum" id="8I03"/>
<dbReference type="PDBsum" id="8IFG"/>
<dbReference type="EMDB" id="EMD-35092"/>
<dbReference type="EMDB" id="EMD-35093"/>
<dbReference type="EMDB" id="EMD-35416"/>
<dbReference type="SMR" id="O59702"/>
<dbReference type="BioGRID" id="276897">
    <property type="interactions" value="59"/>
</dbReference>
<dbReference type="ComplexPortal" id="CPX-9124">
    <property type="entry name" value="RPD3S histone deacetylase complex"/>
</dbReference>
<dbReference type="ComplexPortal" id="CPX-9129">
    <property type="entry name" value="RPD3L histone deacetylase complex"/>
</dbReference>
<dbReference type="DIP" id="DIP-29339N"/>
<dbReference type="FunCoup" id="O59702">
    <property type="interactions" value="751"/>
</dbReference>
<dbReference type="IntAct" id="O59702">
    <property type="interactions" value="8"/>
</dbReference>
<dbReference type="STRING" id="284812.O59702"/>
<dbReference type="iPTMnet" id="O59702"/>
<dbReference type="PaxDb" id="4896-SPBC36.05c.1"/>
<dbReference type="EnsemblFungi" id="SPBC36.05c.1">
    <property type="protein sequence ID" value="SPBC36.05c.1:pep"/>
    <property type="gene ID" value="SPBC36.05c"/>
</dbReference>
<dbReference type="GeneID" id="2540368"/>
<dbReference type="KEGG" id="spo:2540368"/>
<dbReference type="PomBase" id="SPBC36.05c">
    <property type="gene designation" value="clr6"/>
</dbReference>
<dbReference type="VEuPathDB" id="FungiDB:SPBC36.05c"/>
<dbReference type="eggNOG" id="KOG1342">
    <property type="taxonomic scope" value="Eukaryota"/>
</dbReference>
<dbReference type="HOGENOM" id="CLU_007727_7_6_1"/>
<dbReference type="InParanoid" id="O59702"/>
<dbReference type="OMA" id="RCHTDEY"/>
<dbReference type="PhylomeDB" id="O59702"/>
<dbReference type="Reactome" id="R-SPO-3214815">
    <property type="pathway name" value="HDACs deacetylate histones"/>
</dbReference>
<dbReference type="Reactome" id="R-SPO-4551638">
    <property type="pathway name" value="SUMOylation of chromatin organization proteins"/>
</dbReference>
<dbReference type="PRO" id="PR:O59702"/>
<dbReference type="Proteomes" id="UP000002485">
    <property type="component" value="Chromosome II"/>
</dbReference>
<dbReference type="GO" id="GO:0000785">
    <property type="term" value="C:chromatin"/>
    <property type="evidence" value="ECO:0000314"/>
    <property type="project" value="PomBase"/>
</dbReference>
<dbReference type="GO" id="GO:0005829">
    <property type="term" value="C:cytosol"/>
    <property type="evidence" value="ECO:0007005"/>
    <property type="project" value="PomBase"/>
</dbReference>
<dbReference type="GO" id="GO:0005634">
    <property type="term" value="C:nucleus"/>
    <property type="evidence" value="ECO:0000314"/>
    <property type="project" value="PomBase"/>
</dbReference>
<dbReference type="GO" id="GO:0033698">
    <property type="term" value="C:Rpd3L complex"/>
    <property type="evidence" value="ECO:0000314"/>
    <property type="project" value="PomBase"/>
</dbReference>
<dbReference type="GO" id="GO:0070210">
    <property type="term" value="C:Rpd3L-Expanded complex"/>
    <property type="evidence" value="ECO:0000314"/>
    <property type="project" value="PomBase"/>
</dbReference>
<dbReference type="GO" id="GO:0032221">
    <property type="term" value="C:Rpd3S complex"/>
    <property type="evidence" value="ECO:0000314"/>
    <property type="project" value="PomBase"/>
</dbReference>
<dbReference type="GO" id="GO:0004407">
    <property type="term" value="F:histone deacetylase activity"/>
    <property type="evidence" value="ECO:0000269"/>
    <property type="project" value="PomBase"/>
</dbReference>
<dbReference type="GO" id="GO:0031078">
    <property type="term" value="F:histone H3K14 deacetylase activity, hydrolytic mechanism"/>
    <property type="evidence" value="ECO:0000315"/>
    <property type="project" value="PomBase"/>
</dbReference>
<dbReference type="GO" id="GO:0032129">
    <property type="term" value="F:histone H3K9 deacetylase activity, hydrolytic mechanism"/>
    <property type="evidence" value="ECO:0000315"/>
    <property type="project" value="PomBase"/>
</dbReference>
<dbReference type="GO" id="GO:0140937">
    <property type="term" value="F:histone H4K12 deacetylase activity, hydrolytic mechanism"/>
    <property type="evidence" value="ECO:0000314"/>
    <property type="project" value="PomBase"/>
</dbReference>
<dbReference type="GO" id="GO:0034739">
    <property type="term" value="F:histone H4K16 deacetylase activity, hydrolytic mechanism"/>
    <property type="evidence" value="ECO:0000314"/>
    <property type="project" value="PomBase"/>
</dbReference>
<dbReference type="GO" id="GO:0180032">
    <property type="term" value="F:histone H4K5 deacetylase activity, hydrolytic mechanism"/>
    <property type="evidence" value="ECO:0000314"/>
    <property type="project" value="PomBase"/>
</dbReference>
<dbReference type="GO" id="GO:0180033">
    <property type="term" value="F:histone H4K8 deacetylase activity, hydrolytic mechanism"/>
    <property type="evidence" value="ECO:0000314"/>
    <property type="project" value="PomBase"/>
</dbReference>
<dbReference type="GO" id="GO:0033558">
    <property type="term" value="F:protein lysine deacetylase activity"/>
    <property type="evidence" value="ECO:0000315"/>
    <property type="project" value="PomBase"/>
</dbReference>
<dbReference type="GO" id="GO:0040029">
    <property type="term" value="P:epigenetic regulation of gene expression"/>
    <property type="evidence" value="ECO:0000315"/>
    <property type="project" value="PomBase"/>
</dbReference>
<dbReference type="GO" id="GO:0031507">
    <property type="term" value="P:heterochromatin formation"/>
    <property type="evidence" value="ECO:0000318"/>
    <property type="project" value="GO_Central"/>
</dbReference>
<dbReference type="GO" id="GO:0045815">
    <property type="term" value="P:transcription initiation-coupled chromatin remodeling"/>
    <property type="evidence" value="ECO:0000305"/>
    <property type="project" value="PomBase"/>
</dbReference>
<dbReference type="CDD" id="cd10004">
    <property type="entry name" value="RPD3-like"/>
    <property type="match status" value="1"/>
</dbReference>
<dbReference type="FunFam" id="3.40.800.20:FF:000001">
    <property type="entry name" value="Histone deacetylase"/>
    <property type="match status" value="1"/>
</dbReference>
<dbReference type="Gene3D" id="3.40.800.20">
    <property type="entry name" value="Histone deacetylase domain"/>
    <property type="match status" value="1"/>
</dbReference>
<dbReference type="InterPro" id="IPR050284">
    <property type="entry name" value="HDAC_PDAC"/>
</dbReference>
<dbReference type="InterPro" id="IPR000286">
    <property type="entry name" value="His_deacetylse"/>
</dbReference>
<dbReference type="InterPro" id="IPR003084">
    <property type="entry name" value="His_deacetylse_1"/>
</dbReference>
<dbReference type="InterPro" id="IPR023801">
    <property type="entry name" value="His_deacetylse_dom"/>
</dbReference>
<dbReference type="InterPro" id="IPR037138">
    <property type="entry name" value="His_deacetylse_dom_sf"/>
</dbReference>
<dbReference type="InterPro" id="IPR023696">
    <property type="entry name" value="Ureohydrolase_dom_sf"/>
</dbReference>
<dbReference type="PANTHER" id="PTHR10625:SF10">
    <property type="entry name" value="HISTONE DEACETYLASE HDAC1"/>
    <property type="match status" value="1"/>
</dbReference>
<dbReference type="PANTHER" id="PTHR10625">
    <property type="entry name" value="HISTONE DEACETYLASE HDAC1-RELATED"/>
    <property type="match status" value="1"/>
</dbReference>
<dbReference type="Pfam" id="PF00850">
    <property type="entry name" value="Hist_deacetyl"/>
    <property type="match status" value="1"/>
</dbReference>
<dbReference type="PIRSF" id="PIRSF037913">
    <property type="entry name" value="His_deacetylse_1"/>
    <property type="match status" value="1"/>
</dbReference>
<dbReference type="PRINTS" id="PR01270">
    <property type="entry name" value="HDASUPER"/>
</dbReference>
<dbReference type="PRINTS" id="PR01271">
    <property type="entry name" value="HISDACETLASE"/>
</dbReference>
<dbReference type="SUPFAM" id="SSF52768">
    <property type="entry name" value="Arginase/deacetylase"/>
    <property type="match status" value="1"/>
</dbReference>